<accession>Q04R58</accession>
<gene>
    <name evidence="1" type="primary">thrS</name>
    <name type="ordered locus">LBJ_2118</name>
</gene>
<protein>
    <recommendedName>
        <fullName evidence="1">Threonine--tRNA ligase</fullName>
        <ecNumber evidence="1">6.1.1.3</ecNumber>
    </recommendedName>
    <alternativeName>
        <fullName evidence="1">Threonyl-tRNA synthetase</fullName>
        <shortName evidence="1">ThrRS</shortName>
    </alternativeName>
</protein>
<organism>
    <name type="scientific">Leptospira borgpetersenii serovar Hardjo-bovis (strain JB197)</name>
    <dbReference type="NCBI Taxonomy" id="355277"/>
    <lineage>
        <taxon>Bacteria</taxon>
        <taxon>Pseudomonadati</taxon>
        <taxon>Spirochaetota</taxon>
        <taxon>Spirochaetia</taxon>
        <taxon>Leptospirales</taxon>
        <taxon>Leptospiraceae</taxon>
        <taxon>Leptospira</taxon>
    </lineage>
</organism>
<reference key="1">
    <citation type="journal article" date="2006" name="Proc. Natl. Acad. Sci. U.S.A.">
        <title>Genome reduction in Leptospira borgpetersenii reflects limited transmission potential.</title>
        <authorList>
            <person name="Bulach D.M."/>
            <person name="Zuerner R.L."/>
            <person name="Wilson P."/>
            <person name="Seemann T."/>
            <person name="McGrath A."/>
            <person name="Cullen P.A."/>
            <person name="Davis J."/>
            <person name="Johnson M."/>
            <person name="Kuczek E."/>
            <person name="Alt D.P."/>
            <person name="Peterson-Burch B."/>
            <person name="Coppel R.L."/>
            <person name="Rood J.I."/>
            <person name="Davies J.K."/>
            <person name="Adler B."/>
        </authorList>
    </citation>
    <scope>NUCLEOTIDE SEQUENCE [LARGE SCALE GENOMIC DNA]</scope>
    <source>
        <strain>JB197</strain>
    </source>
</reference>
<dbReference type="EC" id="6.1.1.3" evidence="1"/>
<dbReference type="EMBL" id="CP000350">
    <property type="protein sequence ID" value="ABJ76612.1"/>
    <property type="molecule type" value="Genomic_DNA"/>
</dbReference>
<dbReference type="RefSeq" id="WP_011670572.1">
    <property type="nucleotide sequence ID" value="NC_008510.1"/>
</dbReference>
<dbReference type="SMR" id="Q04R58"/>
<dbReference type="KEGG" id="lbj:LBJ_2118"/>
<dbReference type="HOGENOM" id="CLU_008554_0_1_12"/>
<dbReference type="Proteomes" id="UP000000656">
    <property type="component" value="Chromosome 1"/>
</dbReference>
<dbReference type="GO" id="GO:0005737">
    <property type="term" value="C:cytoplasm"/>
    <property type="evidence" value="ECO:0007669"/>
    <property type="project" value="UniProtKB-SubCell"/>
</dbReference>
<dbReference type="GO" id="GO:0005524">
    <property type="term" value="F:ATP binding"/>
    <property type="evidence" value="ECO:0007669"/>
    <property type="project" value="UniProtKB-UniRule"/>
</dbReference>
<dbReference type="GO" id="GO:0046872">
    <property type="term" value="F:metal ion binding"/>
    <property type="evidence" value="ECO:0007669"/>
    <property type="project" value="UniProtKB-KW"/>
</dbReference>
<dbReference type="GO" id="GO:0004829">
    <property type="term" value="F:threonine-tRNA ligase activity"/>
    <property type="evidence" value="ECO:0007669"/>
    <property type="project" value="UniProtKB-UniRule"/>
</dbReference>
<dbReference type="GO" id="GO:0000049">
    <property type="term" value="F:tRNA binding"/>
    <property type="evidence" value="ECO:0007669"/>
    <property type="project" value="UniProtKB-KW"/>
</dbReference>
<dbReference type="GO" id="GO:0006435">
    <property type="term" value="P:threonyl-tRNA aminoacylation"/>
    <property type="evidence" value="ECO:0007669"/>
    <property type="project" value="UniProtKB-UniRule"/>
</dbReference>
<dbReference type="CDD" id="cd01667">
    <property type="entry name" value="TGS_ThrRS"/>
    <property type="match status" value="1"/>
</dbReference>
<dbReference type="CDD" id="cd00860">
    <property type="entry name" value="ThrRS_anticodon"/>
    <property type="match status" value="1"/>
</dbReference>
<dbReference type="CDD" id="cd00771">
    <property type="entry name" value="ThrRS_core"/>
    <property type="match status" value="1"/>
</dbReference>
<dbReference type="FunFam" id="3.30.54.20:FF:000002">
    <property type="entry name" value="Threonine--tRNA ligase"/>
    <property type="match status" value="1"/>
</dbReference>
<dbReference type="FunFam" id="3.30.930.10:FF:000019">
    <property type="entry name" value="Threonine--tRNA ligase"/>
    <property type="match status" value="1"/>
</dbReference>
<dbReference type="FunFam" id="3.40.50.800:FF:000001">
    <property type="entry name" value="Threonine--tRNA ligase"/>
    <property type="match status" value="1"/>
</dbReference>
<dbReference type="FunFam" id="3.30.980.10:FF:000005">
    <property type="entry name" value="Threonyl-tRNA synthetase, mitochondrial"/>
    <property type="match status" value="1"/>
</dbReference>
<dbReference type="Gene3D" id="3.10.20.30">
    <property type="match status" value="1"/>
</dbReference>
<dbReference type="Gene3D" id="3.30.54.20">
    <property type="match status" value="1"/>
</dbReference>
<dbReference type="Gene3D" id="3.40.50.800">
    <property type="entry name" value="Anticodon-binding domain"/>
    <property type="match status" value="1"/>
</dbReference>
<dbReference type="Gene3D" id="3.30.930.10">
    <property type="entry name" value="Bira Bifunctional Protein, Domain 2"/>
    <property type="match status" value="1"/>
</dbReference>
<dbReference type="Gene3D" id="3.30.980.10">
    <property type="entry name" value="Threonyl-trna Synthetase, Chain A, domain 2"/>
    <property type="match status" value="1"/>
</dbReference>
<dbReference type="HAMAP" id="MF_00184">
    <property type="entry name" value="Thr_tRNA_synth"/>
    <property type="match status" value="1"/>
</dbReference>
<dbReference type="InterPro" id="IPR002314">
    <property type="entry name" value="aa-tRNA-synt_IIb"/>
</dbReference>
<dbReference type="InterPro" id="IPR006195">
    <property type="entry name" value="aa-tRNA-synth_II"/>
</dbReference>
<dbReference type="InterPro" id="IPR045864">
    <property type="entry name" value="aa-tRNA-synth_II/BPL/LPL"/>
</dbReference>
<dbReference type="InterPro" id="IPR004154">
    <property type="entry name" value="Anticodon-bd"/>
</dbReference>
<dbReference type="InterPro" id="IPR036621">
    <property type="entry name" value="Anticodon-bd_dom_sf"/>
</dbReference>
<dbReference type="InterPro" id="IPR012675">
    <property type="entry name" value="Beta-grasp_dom_sf"/>
</dbReference>
<dbReference type="InterPro" id="IPR004095">
    <property type="entry name" value="TGS"/>
</dbReference>
<dbReference type="InterPro" id="IPR012676">
    <property type="entry name" value="TGS-like"/>
</dbReference>
<dbReference type="InterPro" id="IPR002320">
    <property type="entry name" value="Thr-tRNA-ligase_IIa"/>
</dbReference>
<dbReference type="InterPro" id="IPR018163">
    <property type="entry name" value="Thr/Ala-tRNA-synth_IIc_edit"/>
</dbReference>
<dbReference type="InterPro" id="IPR047246">
    <property type="entry name" value="ThrRS_anticodon"/>
</dbReference>
<dbReference type="InterPro" id="IPR033728">
    <property type="entry name" value="ThrRS_core"/>
</dbReference>
<dbReference type="InterPro" id="IPR012947">
    <property type="entry name" value="tRNA_SAD"/>
</dbReference>
<dbReference type="NCBIfam" id="TIGR00418">
    <property type="entry name" value="thrS"/>
    <property type="match status" value="1"/>
</dbReference>
<dbReference type="PANTHER" id="PTHR11451:SF44">
    <property type="entry name" value="THREONINE--TRNA LIGASE, CHLOROPLASTIC_MITOCHONDRIAL 2"/>
    <property type="match status" value="1"/>
</dbReference>
<dbReference type="PANTHER" id="PTHR11451">
    <property type="entry name" value="THREONINE-TRNA LIGASE"/>
    <property type="match status" value="1"/>
</dbReference>
<dbReference type="Pfam" id="PF03129">
    <property type="entry name" value="HGTP_anticodon"/>
    <property type="match status" value="1"/>
</dbReference>
<dbReference type="Pfam" id="PF00587">
    <property type="entry name" value="tRNA-synt_2b"/>
    <property type="match status" value="1"/>
</dbReference>
<dbReference type="Pfam" id="PF07973">
    <property type="entry name" value="tRNA_SAD"/>
    <property type="match status" value="1"/>
</dbReference>
<dbReference type="PRINTS" id="PR01047">
    <property type="entry name" value="TRNASYNTHTHR"/>
</dbReference>
<dbReference type="SMART" id="SM00863">
    <property type="entry name" value="tRNA_SAD"/>
    <property type="match status" value="1"/>
</dbReference>
<dbReference type="SUPFAM" id="SSF52954">
    <property type="entry name" value="Class II aaRS ABD-related"/>
    <property type="match status" value="1"/>
</dbReference>
<dbReference type="SUPFAM" id="SSF55681">
    <property type="entry name" value="Class II aaRS and biotin synthetases"/>
    <property type="match status" value="1"/>
</dbReference>
<dbReference type="SUPFAM" id="SSF81271">
    <property type="entry name" value="TGS-like"/>
    <property type="match status" value="1"/>
</dbReference>
<dbReference type="SUPFAM" id="SSF55186">
    <property type="entry name" value="ThrRS/AlaRS common domain"/>
    <property type="match status" value="1"/>
</dbReference>
<dbReference type="PROSITE" id="PS50862">
    <property type="entry name" value="AA_TRNA_LIGASE_II"/>
    <property type="match status" value="1"/>
</dbReference>
<dbReference type="PROSITE" id="PS51880">
    <property type="entry name" value="TGS"/>
    <property type="match status" value="1"/>
</dbReference>
<evidence type="ECO:0000255" key="1">
    <source>
        <dbReference type="HAMAP-Rule" id="MF_00184"/>
    </source>
</evidence>
<evidence type="ECO:0000255" key="2">
    <source>
        <dbReference type="PROSITE-ProRule" id="PRU01228"/>
    </source>
</evidence>
<comment type="function">
    <text evidence="1">Catalyzes the attachment of threonine to tRNA(Thr) in a two-step reaction: L-threonine is first activated by ATP to form Thr-AMP and then transferred to the acceptor end of tRNA(Thr). Also edits incorrectly charged L-seryl-tRNA(Thr).</text>
</comment>
<comment type="catalytic activity">
    <reaction evidence="1">
        <text>tRNA(Thr) + L-threonine + ATP = L-threonyl-tRNA(Thr) + AMP + diphosphate + H(+)</text>
        <dbReference type="Rhea" id="RHEA:24624"/>
        <dbReference type="Rhea" id="RHEA-COMP:9670"/>
        <dbReference type="Rhea" id="RHEA-COMP:9704"/>
        <dbReference type="ChEBI" id="CHEBI:15378"/>
        <dbReference type="ChEBI" id="CHEBI:30616"/>
        <dbReference type="ChEBI" id="CHEBI:33019"/>
        <dbReference type="ChEBI" id="CHEBI:57926"/>
        <dbReference type="ChEBI" id="CHEBI:78442"/>
        <dbReference type="ChEBI" id="CHEBI:78534"/>
        <dbReference type="ChEBI" id="CHEBI:456215"/>
        <dbReference type="EC" id="6.1.1.3"/>
    </reaction>
</comment>
<comment type="cofactor">
    <cofactor evidence="1">
        <name>Zn(2+)</name>
        <dbReference type="ChEBI" id="CHEBI:29105"/>
    </cofactor>
    <text evidence="1">Binds 1 zinc ion per subunit.</text>
</comment>
<comment type="subunit">
    <text evidence="1">Homodimer.</text>
</comment>
<comment type="subcellular location">
    <subcellularLocation>
        <location evidence="1">Cytoplasm</location>
    </subcellularLocation>
</comment>
<comment type="similarity">
    <text evidence="1">Belongs to the class-II aminoacyl-tRNA synthetase family.</text>
</comment>
<feature type="chain" id="PRO_1000020416" description="Threonine--tRNA ligase">
    <location>
        <begin position="1"/>
        <end position="639"/>
    </location>
</feature>
<feature type="domain" description="TGS" evidence="2">
    <location>
        <begin position="1"/>
        <end position="62"/>
    </location>
</feature>
<feature type="region of interest" description="Catalytic" evidence="1">
    <location>
        <begin position="246"/>
        <end position="537"/>
    </location>
</feature>
<feature type="binding site" evidence="1">
    <location>
        <position position="337"/>
    </location>
    <ligand>
        <name>Zn(2+)</name>
        <dbReference type="ChEBI" id="CHEBI:29105"/>
    </ligand>
</feature>
<feature type="binding site" evidence="1">
    <location>
        <position position="388"/>
    </location>
    <ligand>
        <name>Zn(2+)</name>
        <dbReference type="ChEBI" id="CHEBI:29105"/>
    </ligand>
</feature>
<feature type="binding site" evidence="1">
    <location>
        <position position="514"/>
    </location>
    <ligand>
        <name>Zn(2+)</name>
        <dbReference type="ChEBI" id="CHEBI:29105"/>
    </ligand>
</feature>
<sequence length="639" mass="73575">MYQLTLPDKSVKKVALGSTYRDFIEKELPFLKNKALAVRLNGKDIQDLSRVVETDANIEVLTYTEKAGWETFQHSAAHLLGMAVQNLYKNANLTVGPVIENGPGFFYYDIDFQGTIITPEDFPKIEAEMERIVKADYTVWRKVVPKKEAIETFQKLGEKYKIEIIGGILSEEVSIYGMGEWFDLCRGPHVSNSGILKSFKLTAISGAYWKADKDNAMLTRIYGVAFPSKKELDQYLFQIEEAKKRDHRKIGKELDLFSFQKEGPGFPFWHPKGTILWNSLADYLRAECNKRGYQEIKTPAVLSSELWKKSGHWDNFHENMYFTDIDEEDYALKPMNCPGCSLIYKHHLHSYRELPLRFAEFGSVHRHELHGVLHGLFRVRAFTQDDSHIYAPLEHLESEVTDIIDFTFTVYKKFGFSEFKTFIATRPEKSQGRDEDWEFATNTLKQSLEKKGIPYGIKEGEGAFYGPKIEFNIKDSIGRLWQCGTIQVDFSMPERFELDYTDSDGQKKRPVMIHRAIYGSLERFIGILIEHYEGKFPLWISPNQIRILTITEKVAEYAKDVYCELVDAGFRVELDTRNEKIGAKIRDSILKKANYLLILGEKEMESGTLAVRKRGQEDTKTLTRSGFISNLQDEIKSAG</sequence>
<proteinExistence type="inferred from homology"/>
<keyword id="KW-0030">Aminoacyl-tRNA synthetase</keyword>
<keyword id="KW-0067">ATP-binding</keyword>
<keyword id="KW-0963">Cytoplasm</keyword>
<keyword id="KW-0436">Ligase</keyword>
<keyword id="KW-0479">Metal-binding</keyword>
<keyword id="KW-0547">Nucleotide-binding</keyword>
<keyword id="KW-0648">Protein biosynthesis</keyword>
<keyword id="KW-0694">RNA-binding</keyword>
<keyword id="KW-0820">tRNA-binding</keyword>
<keyword id="KW-0862">Zinc</keyword>
<name>SYT_LEPBJ</name>